<evidence type="ECO:0000255" key="1">
    <source>
        <dbReference type="HAMAP-Rule" id="MF_01547"/>
    </source>
</evidence>
<keyword id="KW-0963">Cytoplasm</keyword>
<keyword id="KW-0489">Methyltransferase</keyword>
<keyword id="KW-0698">rRNA processing</keyword>
<keyword id="KW-0949">S-adenosyl-L-methionine</keyword>
<keyword id="KW-0808">Transferase</keyword>
<reference key="1">
    <citation type="journal article" date="2002" name="Science">
        <title>50 million years of genomic stasis in endosymbiotic bacteria.</title>
        <authorList>
            <person name="Tamas I."/>
            <person name="Klasson L."/>
            <person name="Canbaeck B."/>
            <person name="Naeslund A.K."/>
            <person name="Eriksson A.-S."/>
            <person name="Wernegreen J.J."/>
            <person name="Sandstroem J.P."/>
            <person name="Moran N.A."/>
            <person name="Andersson S.G.E."/>
        </authorList>
    </citation>
    <scope>NUCLEOTIDE SEQUENCE [LARGE SCALE GENOMIC DNA]</scope>
    <source>
        <strain>Sg</strain>
    </source>
</reference>
<name>RLME_BUCAP</name>
<proteinExistence type="inferred from homology"/>
<sequence>MISKKKSNSSNRWLSEHFQDQYVKEAKKQKIRSRSWFKLEEIDKNNRLFKPGMNVLDLGSSPGGWSQYAAKKIGKKGYILACDILPMKKIKGVDFFQGDFCNKKTLNLILTNLSNVNLNLIMSDMAPNITGCSSIDMPRIIEICKTVFTISDHVLSRNGVVLVKSFQGEGFNEFFAQMKNLFSKIKICKPKTSRSRSREIFMLATR</sequence>
<organism>
    <name type="scientific">Buchnera aphidicola subsp. Schizaphis graminum (strain Sg)</name>
    <dbReference type="NCBI Taxonomy" id="198804"/>
    <lineage>
        <taxon>Bacteria</taxon>
        <taxon>Pseudomonadati</taxon>
        <taxon>Pseudomonadota</taxon>
        <taxon>Gammaproteobacteria</taxon>
        <taxon>Enterobacterales</taxon>
        <taxon>Erwiniaceae</taxon>
        <taxon>Buchnera</taxon>
    </lineage>
</organism>
<accession>Q8K9G7</accession>
<dbReference type="EC" id="2.1.1.166" evidence="1"/>
<dbReference type="EMBL" id="AE013218">
    <property type="protein sequence ID" value="AAM67922.1"/>
    <property type="molecule type" value="Genomic_DNA"/>
</dbReference>
<dbReference type="RefSeq" id="WP_011053889.1">
    <property type="nucleotide sequence ID" value="NC_004061.1"/>
</dbReference>
<dbReference type="SMR" id="Q8K9G7"/>
<dbReference type="STRING" id="198804.BUsg_370"/>
<dbReference type="GeneID" id="93003840"/>
<dbReference type="KEGG" id="bas:BUsg_370"/>
<dbReference type="eggNOG" id="COG0293">
    <property type="taxonomic scope" value="Bacteria"/>
</dbReference>
<dbReference type="HOGENOM" id="CLU_009422_4_0_6"/>
<dbReference type="Proteomes" id="UP000000416">
    <property type="component" value="Chromosome"/>
</dbReference>
<dbReference type="GO" id="GO:0005737">
    <property type="term" value="C:cytoplasm"/>
    <property type="evidence" value="ECO:0007669"/>
    <property type="project" value="UniProtKB-SubCell"/>
</dbReference>
<dbReference type="GO" id="GO:0008650">
    <property type="term" value="F:rRNA (uridine-2'-O-)-methyltransferase activity"/>
    <property type="evidence" value="ECO:0007669"/>
    <property type="project" value="UniProtKB-UniRule"/>
</dbReference>
<dbReference type="CDD" id="cd02440">
    <property type="entry name" value="AdoMet_MTases"/>
    <property type="match status" value="1"/>
</dbReference>
<dbReference type="FunFam" id="3.40.50.150:FF:000005">
    <property type="entry name" value="Ribosomal RNA large subunit methyltransferase E"/>
    <property type="match status" value="1"/>
</dbReference>
<dbReference type="Gene3D" id="3.40.50.150">
    <property type="entry name" value="Vaccinia Virus protein VP39"/>
    <property type="match status" value="1"/>
</dbReference>
<dbReference type="HAMAP" id="MF_01547">
    <property type="entry name" value="RNA_methyltr_E"/>
    <property type="match status" value="1"/>
</dbReference>
<dbReference type="InterPro" id="IPR050082">
    <property type="entry name" value="RNA_methyltr_RlmE"/>
</dbReference>
<dbReference type="InterPro" id="IPR002877">
    <property type="entry name" value="RNA_MeTrfase_FtsJ_dom"/>
</dbReference>
<dbReference type="InterPro" id="IPR015507">
    <property type="entry name" value="rRNA-MeTfrase_E"/>
</dbReference>
<dbReference type="InterPro" id="IPR029063">
    <property type="entry name" value="SAM-dependent_MTases_sf"/>
</dbReference>
<dbReference type="NCBIfam" id="NF008390">
    <property type="entry name" value="PRK11188.1"/>
    <property type="match status" value="1"/>
</dbReference>
<dbReference type="PANTHER" id="PTHR10920">
    <property type="entry name" value="RIBOSOMAL RNA METHYLTRANSFERASE"/>
    <property type="match status" value="1"/>
</dbReference>
<dbReference type="PANTHER" id="PTHR10920:SF18">
    <property type="entry name" value="RRNA METHYLTRANSFERASE 2, MITOCHONDRIAL"/>
    <property type="match status" value="1"/>
</dbReference>
<dbReference type="Pfam" id="PF01728">
    <property type="entry name" value="FtsJ"/>
    <property type="match status" value="1"/>
</dbReference>
<dbReference type="PIRSF" id="PIRSF005461">
    <property type="entry name" value="23S_rRNA_mtase"/>
    <property type="match status" value="1"/>
</dbReference>
<dbReference type="SUPFAM" id="SSF53335">
    <property type="entry name" value="S-adenosyl-L-methionine-dependent methyltransferases"/>
    <property type="match status" value="1"/>
</dbReference>
<protein>
    <recommendedName>
        <fullName evidence="1">Ribosomal RNA large subunit methyltransferase E</fullName>
        <ecNumber evidence="1">2.1.1.166</ecNumber>
    </recommendedName>
    <alternativeName>
        <fullName evidence="1">23S rRNA Um2552 methyltransferase</fullName>
    </alternativeName>
    <alternativeName>
        <fullName evidence="1">rRNA (uridine-2'-O-)-methyltransferase</fullName>
    </alternativeName>
</protein>
<comment type="function">
    <text evidence="1">Specifically methylates the uridine in position 2552 of 23S rRNA at the 2'-O position of the ribose in the fully assembled 50S ribosomal subunit.</text>
</comment>
<comment type="catalytic activity">
    <reaction evidence="1">
        <text>uridine(2552) in 23S rRNA + S-adenosyl-L-methionine = 2'-O-methyluridine(2552) in 23S rRNA + S-adenosyl-L-homocysteine + H(+)</text>
        <dbReference type="Rhea" id="RHEA:42720"/>
        <dbReference type="Rhea" id="RHEA-COMP:10202"/>
        <dbReference type="Rhea" id="RHEA-COMP:10203"/>
        <dbReference type="ChEBI" id="CHEBI:15378"/>
        <dbReference type="ChEBI" id="CHEBI:57856"/>
        <dbReference type="ChEBI" id="CHEBI:59789"/>
        <dbReference type="ChEBI" id="CHEBI:65315"/>
        <dbReference type="ChEBI" id="CHEBI:74478"/>
        <dbReference type="EC" id="2.1.1.166"/>
    </reaction>
</comment>
<comment type="subcellular location">
    <subcellularLocation>
        <location evidence="1">Cytoplasm</location>
    </subcellularLocation>
</comment>
<comment type="similarity">
    <text evidence="1">Belongs to the class I-like SAM-binding methyltransferase superfamily. RNA methyltransferase RlmE family.</text>
</comment>
<gene>
    <name evidence="1" type="primary">rlmE</name>
    <name evidence="1" type="synonym">ftsJ</name>
    <name evidence="1" type="synonym">rrmJ</name>
    <name type="ordered locus">BUsg_370</name>
</gene>
<feature type="chain" id="PRO_0000155483" description="Ribosomal RNA large subunit methyltransferase E">
    <location>
        <begin position="1"/>
        <end position="206"/>
    </location>
</feature>
<feature type="active site" description="Proton acceptor" evidence="1">
    <location>
        <position position="164"/>
    </location>
</feature>
<feature type="binding site" evidence="1">
    <location>
        <position position="63"/>
    </location>
    <ligand>
        <name>S-adenosyl-L-methionine</name>
        <dbReference type="ChEBI" id="CHEBI:59789"/>
    </ligand>
</feature>
<feature type="binding site" evidence="1">
    <location>
        <position position="65"/>
    </location>
    <ligand>
        <name>S-adenosyl-L-methionine</name>
        <dbReference type="ChEBI" id="CHEBI:59789"/>
    </ligand>
</feature>
<feature type="binding site" evidence="1">
    <location>
        <position position="83"/>
    </location>
    <ligand>
        <name>S-adenosyl-L-methionine</name>
        <dbReference type="ChEBI" id="CHEBI:59789"/>
    </ligand>
</feature>
<feature type="binding site" evidence="1">
    <location>
        <position position="99"/>
    </location>
    <ligand>
        <name>S-adenosyl-L-methionine</name>
        <dbReference type="ChEBI" id="CHEBI:59789"/>
    </ligand>
</feature>
<feature type="binding site" evidence="1">
    <location>
        <position position="124"/>
    </location>
    <ligand>
        <name>S-adenosyl-L-methionine</name>
        <dbReference type="ChEBI" id="CHEBI:59789"/>
    </ligand>
</feature>